<name>RIMP_ECOBW</name>
<sequence length="152" mass="16821">MGLSTLEQKLTEMITAPVEALGFELVGIEFIRGRTSTLRIYIDSEDGINVDDCADVSHQVSAVLDVEDPITVAYNLEVSSPGLDRPLFTAEHYARFVGEEVTLVLRMAVQNRRKWQGVIKAVDGEMITVTVEGKDEVFALSNIQKANLVPHF</sequence>
<dbReference type="EMBL" id="CP001396">
    <property type="protein sequence ID" value="ACR62381.1"/>
    <property type="molecule type" value="Genomic_DNA"/>
</dbReference>
<dbReference type="SMR" id="C4ZSR1"/>
<dbReference type="KEGG" id="ebw:BWG_2874"/>
<dbReference type="HOGENOM" id="CLU_070525_1_1_6"/>
<dbReference type="GO" id="GO:0005829">
    <property type="term" value="C:cytosol"/>
    <property type="evidence" value="ECO:0007669"/>
    <property type="project" value="TreeGrafter"/>
</dbReference>
<dbReference type="GO" id="GO:0000028">
    <property type="term" value="P:ribosomal small subunit assembly"/>
    <property type="evidence" value="ECO:0007669"/>
    <property type="project" value="TreeGrafter"/>
</dbReference>
<dbReference type="GO" id="GO:0006412">
    <property type="term" value="P:translation"/>
    <property type="evidence" value="ECO:0007669"/>
    <property type="project" value="TreeGrafter"/>
</dbReference>
<dbReference type="CDD" id="cd01734">
    <property type="entry name" value="YlxS_C"/>
    <property type="match status" value="1"/>
</dbReference>
<dbReference type="FunFam" id="2.30.30.180:FF:000001">
    <property type="entry name" value="Ribosome maturation factor RimP"/>
    <property type="match status" value="1"/>
</dbReference>
<dbReference type="FunFam" id="3.30.300.70:FF:000001">
    <property type="entry name" value="Ribosome maturation factor RimP"/>
    <property type="match status" value="1"/>
</dbReference>
<dbReference type="Gene3D" id="2.30.30.180">
    <property type="entry name" value="Ribosome maturation factor RimP, C-terminal domain"/>
    <property type="match status" value="1"/>
</dbReference>
<dbReference type="Gene3D" id="3.30.300.70">
    <property type="entry name" value="RimP-like superfamily, N-terminal"/>
    <property type="match status" value="1"/>
</dbReference>
<dbReference type="HAMAP" id="MF_01077">
    <property type="entry name" value="RimP"/>
    <property type="match status" value="1"/>
</dbReference>
<dbReference type="InterPro" id="IPR003728">
    <property type="entry name" value="Ribosome_maturation_RimP"/>
</dbReference>
<dbReference type="InterPro" id="IPR028998">
    <property type="entry name" value="RimP_C"/>
</dbReference>
<dbReference type="InterPro" id="IPR036847">
    <property type="entry name" value="RimP_C_sf"/>
</dbReference>
<dbReference type="InterPro" id="IPR028989">
    <property type="entry name" value="RimP_N"/>
</dbReference>
<dbReference type="InterPro" id="IPR035956">
    <property type="entry name" value="RimP_N_sf"/>
</dbReference>
<dbReference type="NCBIfam" id="NF000927">
    <property type="entry name" value="PRK00092.1-1"/>
    <property type="match status" value="1"/>
</dbReference>
<dbReference type="PANTHER" id="PTHR33867">
    <property type="entry name" value="RIBOSOME MATURATION FACTOR RIMP"/>
    <property type="match status" value="1"/>
</dbReference>
<dbReference type="PANTHER" id="PTHR33867:SF1">
    <property type="entry name" value="RIBOSOME MATURATION FACTOR RIMP"/>
    <property type="match status" value="1"/>
</dbReference>
<dbReference type="Pfam" id="PF17384">
    <property type="entry name" value="DUF150_C"/>
    <property type="match status" value="1"/>
</dbReference>
<dbReference type="Pfam" id="PF02576">
    <property type="entry name" value="RimP_N"/>
    <property type="match status" value="1"/>
</dbReference>
<dbReference type="SUPFAM" id="SSF74942">
    <property type="entry name" value="YhbC-like, C-terminal domain"/>
    <property type="match status" value="1"/>
</dbReference>
<dbReference type="SUPFAM" id="SSF75420">
    <property type="entry name" value="YhbC-like, N-terminal domain"/>
    <property type="match status" value="1"/>
</dbReference>
<comment type="function">
    <text evidence="1">Required for maturation of 30S ribosomal subunits.</text>
</comment>
<comment type="subcellular location">
    <subcellularLocation>
        <location evidence="1">Cytoplasm</location>
    </subcellularLocation>
</comment>
<comment type="similarity">
    <text evidence="1">Belongs to the RimP family.</text>
</comment>
<accession>C4ZSR1</accession>
<feature type="chain" id="PRO_1000213489" description="Ribosome maturation factor RimP">
    <location>
        <begin position="1"/>
        <end position="152"/>
    </location>
</feature>
<evidence type="ECO:0000255" key="1">
    <source>
        <dbReference type="HAMAP-Rule" id="MF_01077"/>
    </source>
</evidence>
<reference key="1">
    <citation type="journal article" date="2009" name="J. Bacteriol.">
        <title>Genomic sequencing reveals regulatory mutations and recombinational events in the widely used MC4100 lineage of Escherichia coli K-12.</title>
        <authorList>
            <person name="Ferenci T."/>
            <person name="Zhou Z."/>
            <person name="Betteridge T."/>
            <person name="Ren Y."/>
            <person name="Liu Y."/>
            <person name="Feng L."/>
            <person name="Reeves P.R."/>
            <person name="Wang L."/>
        </authorList>
    </citation>
    <scope>NUCLEOTIDE SEQUENCE [LARGE SCALE GENOMIC DNA]</scope>
    <source>
        <strain>K12 / MC4100 / BW2952</strain>
    </source>
</reference>
<keyword id="KW-0963">Cytoplasm</keyword>
<keyword id="KW-0690">Ribosome biogenesis</keyword>
<protein>
    <recommendedName>
        <fullName evidence="1">Ribosome maturation factor RimP</fullName>
    </recommendedName>
</protein>
<organism>
    <name type="scientific">Escherichia coli (strain K12 / MC4100 / BW2952)</name>
    <dbReference type="NCBI Taxonomy" id="595496"/>
    <lineage>
        <taxon>Bacteria</taxon>
        <taxon>Pseudomonadati</taxon>
        <taxon>Pseudomonadota</taxon>
        <taxon>Gammaproteobacteria</taxon>
        <taxon>Enterobacterales</taxon>
        <taxon>Enterobacteriaceae</taxon>
        <taxon>Escherichia</taxon>
    </lineage>
</organism>
<proteinExistence type="inferred from homology"/>
<gene>
    <name evidence="1" type="primary">rimP</name>
    <name type="synonym">yhbC</name>
    <name type="ordered locus">BWG_2874</name>
</gene>